<name>NUOC_BRUAB</name>
<keyword id="KW-0997">Cell inner membrane</keyword>
<keyword id="KW-1003">Cell membrane</keyword>
<keyword id="KW-0472">Membrane</keyword>
<keyword id="KW-0520">NAD</keyword>
<keyword id="KW-0874">Quinone</keyword>
<keyword id="KW-1278">Translocase</keyword>
<keyword id="KW-0813">Transport</keyword>
<keyword id="KW-0830">Ubiquinone</keyword>
<protein>
    <recommendedName>
        <fullName evidence="1">NADH-quinone oxidoreductase subunit C</fullName>
        <ecNumber evidence="1">7.1.1.-</ecNumber>
    </recommendedName>
    <alternativeName>
        <fullName evidence="1">NADH dehydrogenase I subunit C</fullName>
    </alternativeName>
    <alternativeName>
        <fullName evidence="1">NDH-1 subunit C</fullName>
    </alternativeName>
</protein>
<gene>
    <name evidence="1" type="primary">nuoC</name>
    <name type="ordered locus">BruAb1_0818</name>
</gene>
<evidence type="ECO:0000255" key="1">
    <source>
        <dbReference type="HAMAP-Rule" id="MF_01357"/>
    </source>
</evidence>
<sequence>MSEEALGELSGYIRERLGDAIEEANLAYGELTLCVPVASLIGVLTLLRDDVQCQFVNLTDISGVDYPQREKRFDVVYQLLSPRQNQRIRVKVQADEDTLVPSAVPVFFGAEWYEREAYDMYGILFSGHPDLRRILTDYGFEGHPLRKDFPLTGFVEVRYNDELKRVVYEPVQLRQEFRNFDFLSPWEGTDYVLPGDEKAKTN</sequence>
<feature type="chain" id="PRO_0000358050" description="NADH-quinone oxidoreductase subunit C">
    <location>
        <begin position="1"/>
        <end position="202"/>
    </location>
</feature>
<comment type="function">
    <text evidence="1">NDH-1 shuttles electrons from NADH, via FMN and iron-sulfur (Fe-S) centers, to quinones in the respiratory chain. The immediate electron acceptor for the enzyme in this species is believed to be ubiquinone. Couples the redox reaction to proton translocation (for every two electrons transferred, four hydrogen ions are translocated across the cytoplasmic membrane), and thus conserves the redox energy in a proton gradient.</text>
</comment>
<comment type="catalytic activity">
    <reaction evidence="1">
        <text>a quinone + NADH + 5 H(+)(in) = a quinol + NAD(+) + 4 H(+)(out)</text>
        <dbReference type="Rhea" id="RHEA:57888"/>
        <dbReference type="ChEBI" id="CHEBI:15378"/>
        <dbReference type="ChEBI" id="CHEBI:24646"/>
        <dbReference type="ChEBI" id="CHEBI:57540"/>
        <dbReference type="ChEBI" id="CHEBI:57945"/>
        <dbReference type="ChEBI" id="CHEBI:132124"/>
    </reaction>
</comment>
<comment type="subunit">
    <text evidence="1">NDH-1 is composed of 14 different subunits. Subunits NuoB, C, D, E, F, and G constitute the peripheral sector of the complex.</text>
</comment>
<comment type="subcellular location">
    <subcellularLocation>
        <location evidence="1">Cell inner membrane</location>
        <topology evidence="1">Peripheral membrane protein</topology>
        <orientation evidence="1">Cytoplasmic side</orientation>
    </subcellularLocation>
</comment>
<comment type="similarity">
    <text evidence="1">Belongs to the complex I 30 kDa subunit family.</text>
</comment>
<accession>Q57DU9</accession>
<reference key="1">
    <citation type="journal article" date="2005" name="J. Bacteriol.">
        <title>Completion of the genome sequence of Brucella abortus and comparison to the highly similar genomes of Brucella melitensis and Brucella suis.</title>
        <authorList>
            <person name="Halling S.M."/>
            <person name="Peterson-Burch B.D."/>
            <person name="Bricker B.J."/>
            <person name="Zuerner R.L."/>
            <person name="Qing Z."/>
            <person name="Li L.-L."/>
            <person name="Kapur V."/>
            <person name="Alt D.P."/>
            <person name="Olsen S.C."/>
        </authorList>
    </citation>
    <scope>NUCLEOTIDE SEQUENCE [LARGE SCALE GENOMIC DNA]</scope>
    <source>
        <strain>9-941</strain>
    </source>
</reference>
<proteinExistence type="inferred from homology"/>
<dbReference type="EC" id="7.1.1.-" evidence="1"/>
<dbReference type="EMBL" id="AE017223">
    <property type="protein sequence ID" value="AAX74185.1"/>
    <property type="molecule type" value="Genomic_DNA"/>
</dbReference>
<dbReference type="RefSeq" id="WP_002963939.1">
    <property type="nucleotide sequence ID" value="NC_006932.1"/>
</dbReference>
<dbReference type="SMR" id="Q57DU9"/>
<dbReference type="EnsemblBacteria" id="AAX74185">
    <property type="protein sequence ID" value="AAX74185"/>
    <property type="gene ID" value="BruAb1_0818"/>
</dbReference>
<dbReference type="KEGG" id="bmb:BruAb1_0818"/>
<dbReference type="HOGENOM" id="CLU_042628_2_1_5"/>
<dbReference type="Proteomes" id="UP000000540">
    <property type="component" value="Chromosome I"/>
</dbReference>
<dbReference type="GO" id="GO:0005886">
    <property type="term" value="C:plasma membrane"/>
    <property type="evidence" value="ECO:0007669"/>
    <property type="project" value="UniProtKB-SubCell"/>
</dbReference>
<dbReference type="GO" id="GO:0008137">
    <property type="term" value="F:NADH dehydrogenase (ubiquinone) activity"/>
    <property type="evidence" value="ECO:0007669"/>
    <property type="project" value="InterPro"/>
</dbReference>
<dbReference type="GO" id="GO:0050136">
    <property type="term" value="F:NADH:ubiquinone reductase (non-electrogenic) activity"/>
    <property type="evidence" value="ECO:0007669"/>
    <property type="project" value="UniProtKB-UniRule"/>
</dbReference>
<dbReference type="GO" id="GO:0048038">
    <property type="term" value="F:quinone binding"/>
    <property type="evidence" value="ECO:0007669"/>
    <property type="project" value="UniProtKB-KW"/>
</dbReference>
<dbReference type="Gene3D" id="3.30.460.80">
    <property type="entry name" value="NADH:ubiquinone oxidoreductase, 30kDa subunit"/>
    <property type="match status" value="1"/>
</dbReference>
<dbReference type="HAMAP" id="MF_01357">
    <property type="entry name" value="NDH1_NuoC"/>
    <property type="match status" value="1"/>
</dbReference>
<dbReference type="InterPro" id="IPR010218">
    <property type="entry name" value="NADH_DH_suC"/>
</dbReference>
<dbReference type="InterPro" id="IPR037232">
    <property type="entry name" value="NADH_quin_OxRdtase_su_C/D-like"/>
</dbReference>
<dbReference type="InterPro" id="IPR001268">
    <property type="entry name" value="NADH_UbQ_OxRdtase_30kDa_su"/>
</dbReference>
<dbReference type="InterPro" id="IPR020396">
    <property type="entry name" value="NADH_UbQ_OxRdtase_CS"/>
</dbReference>
<dbReference type="NCBIfam" id="TIGR01961">
    <property type="entry name" value="NuoC_fam"/>
    <property type="match status" value="1"/>
</dbReference>
<dbReference type="NCBIfam" id="NF004730">
    <property type="entry name" value="PRK06074.1-1"/>
    <property type="match status" value="1"/>
</dbReference>
<dbReference type="NCBIfam" id="NF004733">
    <property type="entry name" value="PRK06074.1-5"/>
    <property type="match status" value="1"/>
</dbReference>
<dbReference type="PANTHER" id="PTHR10884:SF14">
    <property type="entry name" value="NADH DEHYDROGENASE [UBIQUINONE] IRON-SULFUR PROTEIN 3, MITOCHONDRIAL"/>
    <property type="match status" value="1"/>
</dbReference>
<dbReference type="PANTHER" id="PTHR10884">
    <property type="entry name" value="NADH DEHYDROGENASE UBIQUINONE IRON-SULFUR PROTEIN 3"/>
    <property type="match status" value="1"/>
</dbReference>
<dbReference type="Pfam" id="PF00329">
    <property type="entry name" value="Complex1_30kDa"/>
    <property type="match status" value="1"/>
</dbReference>
<dbReference type="SUPFAM" id="SSF143243">
    <property type="entry name" value="Nqo5-like"/>
    <property type="match status" value="1"/>
</dbReference>
<dbReference type="PROSITE" id="PS00542">
    <property type="entry name" value="COMPLEX1_30K"/>
    <property type="match status" value="1"/>
</dbReference>
<organism>
    <name type="scientific">Brucella abortus biovar 1 (strain 9-941)</name>
    <dbReference type="NCBI Taxonomy" id="262698"/>
    <lineage>
        <taxon>Bacteria</taxon>
        <taxon>Pseudomonadati</taxon>
        <taxon>Pseudomonadota</taxon>
        <taxon>Alphaproteobacteria</taxon>
        <taxon>Hyphomicrobiales</taxon>
        <taxon>Brucellaceae</taxon>
        <taxon>Brucella/Ochrobactrum group</taxon>
        <taxon>Brucella</taxon>
    </lineage>
</organism>